<keyword id="KW-0150">Chloroplast</keyword>
<keyword id="KW-0507">mRNA processing</keyword>
<keyword id="KW-0934">Plastid</keyword>
<keyword id="KW-0694">RNA-binding</keyword>
<keyword id="KW-0819">tRNA processing</keyword>
<evidence type="ECO:0000255" key="1">
    <source>
        <dbReference type="HAMAP-Rule" id="MF_01390"/>
    </source>
</evidence>
<gene>
    <name evidence="1" type="primary">matK</name>
</gene>
<proteinExistence type="inferred from homology"/>
<comment type="function">
    <text evidence="1">Usually encoded in the trnK tRNA gene intron. Probably assists in splicing its own and other chloroplast group II introns.</text>
</comment>
<comment type="subcellular location">
    <subcellularLocation>
        <location>Plastid</location>
        <location>Chloroplast</location>
    </subcellularLocation>
</comment>
<comment type="similarity">
    <text evidence="1">Belongs to the intron maturase 2 family. MatK subfamily.</text>
</comment>
<geneLocation type="chloroplast"/>
<protein>
    <recommendedName>
        <fullName evidence="1">Maturase K</fullName>
    </recommendedName>
    <alternativeName>
        <fullName evidence="1">Intron maturase</fullName>
    </alternativeName>
</protein>
<organism>
    <name type="scientific">Keckiella cordifolia</name>
    <name type="common">Heart-leafed penstemon</name>
    <name type="synonym">Penstemon cordifolius</name>
    <dbReference type="NCBI Taxonomy" id="155435"/>
    <lineage>
        <taxon>Eukaryota</taxon>
        <taxon>Viridiplantae</taxon>
        <taxon>Streptophyta</taxon>
        <taxon>Embryophyta</taxon>
        <taxon>Tracheophyta</taxon>
        <taxon>Spermatophyta</taxon>
        <taxon>Magnoliopsida</taxon>
        <taxon>eudicotyledons</taxon>
        <taxon>Gunneridae</taxon>
        <taxon>Pentapetalae</taxon>
        <taxon>asterids</taxon>
        <taxon>lamiids</taxon>
        <taxon>Lamiales</taxon>
        <taxon>Plantaginaceae</taxon>
        <taxon>Cheloneae</taxon>
        <taxon>Keckiella</taxon>
    </lineage>
</organism>
<sequence>MEEIQRYLQLKRSQQHNFLYPLIFQEYIYAFAHDRIFSRSFLSENTGYENKSSLLIVKRLITRMYQQNPFIIFPNDSTQNQFLGHNKNFYSQLISEGFAFIVEIPFFLRLISSLEGKKKKIVKSQNLRSIHSIFPFLEDSFSHLNFVLDILIPQPVHAEILVQTLRYWVKDASSLHLIRFLLNEYCNWNSLIFPKKASSSFSNSKRNQRNQRLFLFLYNSHVCEYESIFFFLRNQSSHLRSTYSRVLLERIYFYGKIEHLVNVVVKVKDFQANLWLVKEPCMHYVRYQRKSLLASKGTSLFMNKWKCFLVTFWQWHFALWFHPRRIYINQLSKNLLEFLGYLSSVQMNPSVVRSQILENSFLINNAIKKFDTLVPIIPLIASLANTKFCNVLGHPISKPVWADLSDSHIIDRFGRICSNLSHYHSGSSKKKSLYRIKYILRLSCARTLARKHKSTVRAFLKRLGSELLEEFLMSEEDVLFLTFPKASSTLRGVYKSRIWYLDILCISDLVNYK</sequence>
<accession>Q8SM14</accession>
<dbReference type="EMBL" id="AF375200">
    <property type="protein sequence ID" value="AAM19372.1"/>
    <property type="molecule type" value="Genomic_DNA"/>
</dbReference>
<dbReference type="GO" id="GO:0009507">
    <property type="term" value="C:chloroplast"/>
    <property type="evidence" value="ECO:0007669"/>
    <property type="project" value="UniProtKB-SubCell"/>
</dbReference>
<dbReference type="GO" id="GO:0003723">
    <property type="term" value="F:RNA binding"/>
    <property type="evidence" value="ECO:0007669"/>
    <property type="project" value="UniProtKB-KW"/>
</dbReference>
<dbReference type="GO" id="GO:0006397">
    <property type="term" value="P:mRNA processing"/>
    <property type="evidence" value="ECO:0007669"/>
    <property type="project" value="UniProtKB-KW"/>
</dbReference>
<dbReference type="GO" id="GO:0008380">
    <property type="term" value="P:RNA splicing"/>
    <property type="evidence" value="ECO:0007669"/>
    <property type="project" value="UniProtKB-UniRule"/>
</dbReference>
<dbReference type="GO" id="GO:0008033">
    <property type="term" value="P:tRNA processing"/>
    <property type="evidence" value="ECO:0007669"/>
    <property type="project" value="UniProtKB-KW"/>
</dbReference>
<dbReference type="HAMAP" id="MF_01390">
    <property type="entry name" value="MatK"/>
    <property type="match status" value="1"/>
</dbReference>
<dbReference type="InterPro" id="IPR024937">
    <property type="entry name" value="Domain_X"/>
</dbReference>
<dbReference type="InterPro" id="IPR002866">
    <property type="entry name" value="Maturase_MatK"/>
</dbReference>
<dbReference type="InterPro" id="IPR024942">
    <property type="entry name" value="Maturase_MatK_N"/>
</dbReference>
<dbReference type="PANTHER" id="PTHR34811">
    <property type="entry name" value="MATURASE K"/>
    <property type="match status" value="1"/>
</dbReference>
<dbReference type="PANTHER" id="PTHR34811:SF1">
    <property type="entry name" value="MATURASE K"/>
    <property type="match status" value="1"/>
</dbReference>
<dbReference type="Pfam" id="PF01348">
    <property type="entry name" value="Intron_maturas2"/>
    <property type="match status" value="1"/>
</dbReference>
<dbReference type="Pfam" id="PF01824">
    <property type="entry name" value="MatK_N"/>
    <property type="match status" value="1"/>
</dbReference>
<feature type="chain" id="PRO_0000143444" description="Maturase K">
    <location>
        <begin position="1"/>
        <end position="513"/>
    </location>
</feature>
<reference key="1">
    <citation type="journal article" date="2002" name="Syst. Bot.">
        <title>A phylogenetic and biogeographic analysis of the Cheloneae (Scrophulariaceae) based on ITS and matK sequence data.</title>
        <authorList>
            <person name="Wolfe A.D."/>
            <person name="Datwyler S.L."/>
            <person name="Randle C.P."/>
        </authorList>
        <dbReference type="AGRICOLA" id="IND23289696"/>
    </citation>
    <scope>NUCLEOTIDE SEQUENCE [GENOMIC DNA]</scope>
</reference>
<name>MATK_KECCO</name>